<name>COBT_SHIF8</name>
<feature type="chain" id="PRO_1000021635" description="Nicotinate-nucleotide--dimethylbenzimidazole phosphoribosyltransferase">
    <location>
        <begin position="1"/>
        <end position="359"/>
    </location>
</feature>
<feature type="active site" description="Proton acceptor" evidence="1">
    <location>
        <position position="318"/>
    </location>
</feature>
<gene>
    <name evidence="1" type="primary">cobT</name>
    <name type="ordered locus">SFV_2063</name>
</gene>
<keyword id="KW-0169">Cobalamin biosynthesis</keyword>
<keyword id="KW-0328">Glycosyltransferase</keyword>
<keyword id="KW-0808">Transferase</keyword>
<proteinExistence type="inferred from homology"/>
<protein>
    <recommendedName>
        <fullName evidence="1">Nicotinate-nucleotide--dimethylbenzimidazole phosphoribosyltransferase</fullName>
        <shortName evidence="1">NN:DBI PRT</shortName>
        <ecNumber evidence="1">2.4.2.21</ecNumber>
    </recommendedName>
    <alternativeName>
        <fullName evidence="1">N(1)-alpha-phosphoribosyltransferase</fullName>
    </alternativeName>
</protein>
<reference key="1">
    <citation type="journal article" date="2006" name="BMC Genomics">
        <title>Complete genome sequence of Shigella flexneri 5b and comparison with Shigella flexneri 2a.</title>
        <authorList>
            <person name="Nie H."/>
            <person name="Yang F."/>
            <person name="Zhang X."/>
            <person name="Yang J."/>
            <person name="Chen L."/>
            <person name="Wang J."/>
            <person name="Xiong Z."/>
            <person name="Peng J."/>
            <person name="Sun L."/>
            <person name="Dong J."/>
            <person name="Xue Y."/>
            <person name="Xu X."/>
            <person name="Chen S."/>
            <person name="Yao Z."/>
            <person name="Shen Y."/>
            <person name="Jin Q."/>
        </authorList>
    </citation>
    <scope>NUCLEOTIDE SEQUENCE [LARGE SCALE GENOMIC DNA]</scope>
    <source>
        <strain>8401</strain>
    </source>
</reference>
<accession>Q0T3C4</accession>
<evidence type="ECO:0000255" key="1">
    <source>
        <dbReference type="HAMAP-Rule" id="MF_00230"/>
    </source>
</evidence>
<organism>
    <name type="scientific">Shigella flexneri serotype 5b (strain 8401)</name>
    <dbReference type="NCBI Taxonomy" id="373384"/>
    <lineage>
        <taxon>Bacteria</taxon>
        <taxon>Pseudomonadati</taxon>
        <taxon>Pseudomonadota</taxon>
        <taxon>Gammaproteobacteria</taxon>
        <taxon>Enterobacterales</taxon>
        <taxon>Enterobacteriaceae</taxon>
        <taxon>Shigella</taxon>
    </lineage>
</organism>
<comment type="function">
    <text evidence="1">Catalyzes the synthesis of alpha-ribazole-5'-phosphate from nicotinate mononucleotide (NAMN) and 5,6-dimethylbenzimidazole (DMB).</text>
</comment>
<comment type="catalytic activity">
    <reaction evidence="1">
        <text>5,6-dimethylbenzimidazole + nicotinate beta-D-ribonucleotide = alpha-ribazole 5'-phosphate + nicotinate + H(+)</text>
        <dbReference type="Rhea" id="RHEA:11196"/>
        <dbReference type="ChEBI" id="CHEBI:15378"/>
        <dbReference type="ChEBI" id="CHEBI:15890"/>
        <dbReference type="ChEBI" id="CHEBI:32544"/>
        <dbReference type="ChEBI" id="CHEBI:57502"/>
        <dbReference type="ChEBI" id="CHEBI:57918"/>
        <dbReference type="EC" id="2.4.2.21"/>
    </reaction>
</comment>
<comment type="pathway">
    <text evidence="1">Nucleoside biosynthesis; alpha-ribazole biosynthesis; alpha-ribazole from 5,6-dimethylbenzimidazole: step 1/2.</text>
</comment>
<comment type="subunit">
    <text evidence="1">Homodimer.</text>
</comment>
<comment type="similarity">
    <text evidence="1">Belongs to the CobT family.</text>
</comment>
<sequence length="359" mass="37030">MQIIADLLNTIPAINSAAMSRAQRHVDGLFKPVGSLGKLEALAIQLAGMPGVNGIPHVGKKAVLVMCADHGVWEEGVAISPKEVTAIQAENMTRGTTGVCVLAAQAGANVHVIDVGIDTAEPIPGLINMRVARGSGNIASAPAMSRRQAEKLLLDVICYTRELAKNGVTLFGVGELGMANTTPAAAIVSTITGRDPEEVVGIGANLPTDKLANKIDVVRRAITLNQPNPQDGVDVLAKVGGFDLVGIAGVMLGAASCGLPVLLDGFLSYAAALAACQMSPAIKPYLIPSHLSAEKGARIALSHLGLEPYLNRDMRIGEGIVQALAMSIIEAACAIYNNMGELAASNIVLPGNTTSDLNS</sequence>
<dbReference type="EC" id="2.4.2.21" evidence="1"/>
<dbReference type="EMBL" id="CP000266">
    <property type="protein sequence ID" value="ABF04191.1"/>
    <property type="molecule type" value="Genomic_DNA"/>
</dbReference>
<dbReference type="RefSeq" id="WP_001165577.1">
    <property type="nucleotide sequence ID" value="NC_008258.1"/>
</dbReference>
<dbReference type="SMR" id="Q0T3C4"/>
<dbReference type="KEGG" id="sfv:SFV_2063"/>
<dbReference type="HOGENOM" id="CLU_002982_0_0_6"/>
<dbReference type="UniPathway" id="UPA00061">
    <property type="reaction ID" value="UER00516"/>
</dbReference>
<dbReference type="Proteomes" id="UP000000659">
    <property type="component" value="Chromosome"/>
</dbReference>
<dbReference type="GO" id="GO:0008939">
    <property type="term" value="F:nicotinate-nucleotide-dimethylbenzimidazole phosphoribosyltransferase activity"/>
    <property type="evidence" value="ECO:0007669"/>
    <property type="project" value="UniProtKB-UniRule"/>
</dbReference>
<dbReference type="GO" id="GO:0009236">
    <property type="term" value="P:cobalamin biosynthetic process"/>
    <property type="evidence" value="ECO:0007669"/>
    <property type="project" value="UniProtKB-KW"/>
</dbReference>
<dbReference type="CDD" id="cd02439">
    <property type="entry name" value="DMB-PRT_CobT"/>
    <property type="match status" value="1"/>
</dbReference>
<dbReference type="FunFam" id="3.40.50.10210:FF:000001">
    <property type="entry name" value="Nicotinate-nucleotide--dimethylbenzimidazole phosphoribosyltransferase"/>
    <property type="match status" value="1"/>
</dbReference>
<dbReference type="Gene3D" id="1.10.1610.10">
    <property type="match status" value="1"/>
</dbReference>
<dbReference type="Gene3D" id="3.40.50.10210">
    <property type="match status" value="1"/>
</dbReference>
<dbReference type="HAMAP" id="MF_00230">
    <property type="entry name" value="CobT"/>
    <property type="match status" value="1"/>
</dbReference>
<dbReference type="InterPro" id="IPR003200">
    <property type="entry name" value="Nict_dMeBzImd_PRibTrfase"/>
</dbReference>
<dbReference type="InterPro" id="IPR017846">
    <property type="entry name" value="Nict_dMeBzImd_PRibTrfase_bact"/>
</dbReference>
<dbReference type="InterPro" id="IPR023195">
    <property type="entry name" value="Nict_dMeBzImd_PRibTrfase_N"/>
</dbReference>
<dbReference type="InterPro" id="IPR036087">
    <property type="entry name" value="Nict_dMeBzImd_PRibTrfase_sf"/>
</dbReference>
<dbReference type="NCBIfam" id="TIGR03160">
    <property type="entry name" value="cobT_DBIPRT"/>
    <property type="match status" value="1"/>
</dbReference>
<dbReference type="NCBIfam" id="NF000996">
    <property type="entry name" value="PRK00105.1"/>
    <property type="match status" value="1"/>
</dbReference>
<dbReference type="PANTHER" id="PTHR43463">
    <property type="entry name" value="NICOTINATE-NUCLEOTIDE--DIMETHYLBENZIMIDAZOLE PHOSPHORIBOSYLTRANSFERASE"/>
    <property type="match status" value="1"/>
</dbReference>
<dbReference type="PANTHER" id="PTHR43463:SF1">
    <property type="entry name" value="NICOTINATE-NUCLEOTIDE--DIMETHYLBENZIMIDAZOLE PHOSPHORIBOSYLTRANSFERASE"/>
    <property type="match status" value="1"/>
</dbReference>
<dbReference type="Pfam" id="PF02277">
    <property type="entry name" value="DBI_PRT"/>
    <property type="match status" value="1"/>
</dbReference>
<dbReference type="SUPFAM" id="SSF52733">
    <property type="entry name" value="Nicotinate mononucleotide:5,6-dimethylbenzimidazole phosphoribosyltransferase (CobT)"/>
    <property type="match status" value="1"/>
</dbReference>